<name>GSTXC_TOBAC</name>
<feature type="chain" id="PRO_0000185864" description="Probable glutathione S-transferase parC">
    <location>
        <begin position="1"/>
        <end position="221"/>
    </location>
</feature>
<feature type="domain" description="GST N-terminal">
    <location>
        <begin position="4"/>
        <end position="83"/>
    </location>
</feature>
<feature type="domain" description="GST C-terminal">
    <location>
        <begin position="90"/>
        <end position="214"/>
    </location>
</feature>
<feature type="binding site" evidence="1">
    <location>
        <position position="14"/>
    </location>
    <ligand>
        <name>glutathione</name>
        <dbReference type="ChEBI" id="CHEBI:57925"/>
    </ligand>
</feature>
<feature type="binding site" evidence="1">
    <location>
        <position position="41"/>
    </location>
    <ligand>
        <name>glutathione</name>
        <dbReference type="ChEBI" id="CHEBI:57925"/>
    </ligand>
</feature>
<feature type="binding site" evidence="1">
    <location>
        <position position="55"/>
    </location>
    <ligand>
        <name>glutathione</name>
        <dbReference type="ChEBI" id="CHEBI:57925"/>
    </ligand>
</feature>
<feature type="binding site" evidence="1">
    <location>
        <begin position="67"/>
        <end position="68"/>
    </location>
    <ligand>
        <name>glutathione</name>
        <dbReference type="ChEBI" id="CHEBI:57925"/>
    </ligand>
</feature>
<dbReference type="EC" id="2.5.1.18"/>
<dbReference type="EMBL" id="X64398">
    <property type="protein sequence ID" value="CAA45740.1"/>
    <property type="molecule type" value="mRNA"/>
</dbReference>
<dbReference type="PIR" id="S19185">
    <property type="entry name" value="S19185"/>
</dbReference>
<dbReference type="RefSeq" id="NP_001313053.1">
    <property type="nucleotide sequence ID" value="NM_001326124.1"/>
</dbReference>
<dbReference type="SMR" id="P49332"/>
<dbReference type="STRING" id="4097.P49332"/>
<dbReference type="PaxDb" id="4097-P49332"/>
<dbReference type="GeneID" id="107823949"/>
<dbReference type="KEGG" id="nta:107823949"/>
<dbReference type="OrthoDB" id="1215279at2759"/>
<dbReference type="Proteomes" id="UP000084051">
    <property type="component" value="Unplaced"/>
</dbReference>
<dbReference type="GO" id="GO:0005737">
    <property type="term" value="C:cytoplasm"/>
    <property type="evidence" value="ECO:0000318"/>
    <property type="project" value="GO_Central"/>
</dbReference>
<dbReference type="GO" id="GO:0004364">
    <property type="term" value="F:glutathione transferase activity"/>
    <property type="evidence" value="ECO:0000318"/>
    <property type="project" value="GO_Central"/>
</dbReference>
<dbReference type="GO" id="GO:0009734">
    <property type="term" value="P:auxin-activated signaling pathway"/>
    <property type="evidence" value="ECO:0007669"/>
    <property type="project" value="UniProtKB-KW"/>
</dbReference>
<dbReference type="GO" id="GO:0006749">
    <property type="term" value="P:glutathione metabolic process"/>
    <property type="evidence" value="ECO:0000318"/>
    <property type="project" value="GO_Central"/>
</dbReference>
<dbReference type="CDD" id="cd03185">
    <property type="entry name" value="GST_C_Tau"/>
    <property type="match status" value="1"/>
</dbReference>
<dbReference type="CDD" id="cd03058">
    <property type="entry name" value="GST_N_Tau"/>
    <property type="match status" value="1"/>
</dbReference>
<dbReference type="FunFam" id="1.20.1050.10:FF:000018">
    <property type="entry name" value="Glutathione S-transferase U20"/>
    <property type="match status" value="1"/>
</dbReference>
<dbReference type="FunFam" id="3.40.30.10:FF:000014">
    <property type="entry name" value="Tau class glutathione S-transferase"/>
    <property type="match status" value="1"/>
</dbReference>
<dbReference type="Gene3D" id="1.20.1050.10">
    <property type="match status" value="1"/>
</dbReference>
<dbReference type="Gene3D" id="3.40.30.10">
    <property type="entry name" value="Glutaredoxin"/>
    <property type="match status" value="1"/>
</dbReference>
<dbReference type="InterPro" id="IPR010987">
    <property type="entry name" value="Glutathione-S-Trfase_C-like"/>
</dbReference>
<dbReference type="InterPro" id="IPR036282">
    <property type="entry name" value="Glutathione-S-Trfase_C_sf"/>
</dbReference>
<dbReference type="InterPro" id="IPR040079">
    <property type="entry name" value="Glutathione_S-Trfase"/>
</dbReference>
<dbReference type="InterPro" id="IPR004045">
    <property type="entry name" value="Glutathione_S-Trfase_N"/>
</dbReference>
<dbReference type="InterPro" id="IPR004046">
    <property type="entry name" value="GST_C"/>
</dbReference>
<dbReference type="InterPro" id="IPR045074">
    <property type="entry name" value="GST_C_Tau"/>
</dbReference>
<dbReference type="InterPro" id="IPR045073">
    <property type="entry name" value="Omega/Tau-like"/>
</dbReference>
<dbReference type="InterPro" id="IPR036249">
    <property type="entry name" value="Thioredoxin-like_sf"/>
</dbReference>
<dbReference type="PANTHER" id="PTHR11260:SF726">
    <property type="entry name" value="GLUTATHIONE S-TRANSFERASE PARC-RELATED"/>
    <property type="match status" value="1"/>
</dbReference>
<dbReference type="PANTHER" id="PTHR11260">
    <property type="entry name" value="GLUTATHIONE S-TRANSFERASE, GST, SUPERFAMILY, GST DOMAIN CONTAINING"/>
    <property type="match status" value="1"/>
</dbReference>
<dbReference type="Pfam" id="PF00043">
    <property type="entry name" value="GST_C"/>
    <property type="match status" value="1"/>
</dbReference>
<dbReference type="Pfam" id="PF02798">
    <property type="entry name" value="GST_N"/>
    <property type="match status" value="1"/>
</dbReference>
<dbReference type="SFLD" id="SFLDS00019">
    <property type="entry name" value="Glutathione_Transferase_(cytos"/>
    <property type="match status" value="1"/>
</dbReference>
<dbReference type="SFLD" id="SFLDG01152">
    <property type="entry name" value="Main.3:_Omega-_and_Tau-like"/>
    <property type="match status" value="1"/>
</dbReference>
<dbReference type="SUPFAM" id="SSF47616">
    <property type="entry name" value="GST C-terminal domain-like"/>
    <property type="match status" value="1"/>
</dbReference>
<dbReference type="SUPFAM" id="SSF52833">
    <property type="entry name" value="Thioredoxin-like"/>
    <property type="match status" value="1"/>
</dbReference>
<dbReference type="PROSITE" id="PS50405">
    <property type="entry name" value="GST_CTER"/>
    <property type="match status" value="1"/>
</dbReference>
<dbReference type="PROSITE" id="PS50404">
    <property type="entry name" value="GST_NTER"/>
    <property type="match status" value="1"/>
</dbReference>
<organism>
    <name type="scientific">Nicotiana tabacum</name>
    <name type="common">Common tobacco</name>
    <dbReference type="NCBI Taxonomy" id="4097"/>
    <lineage>
        <taxon>Eukaryota</taxon>
        <taxon>Viridiplantae</taxon>
        <taxon>Streptophyta</taxon>
        <taxon>Embryophyta</taxon>
        <taxon>Tracheophyta</taxon>
        <taxon>Spermatophyta</taxon>
        <taxon>Magnoliopsida</taxon>
        <taxon>eudicotyledons</taxon>
        <taxon>Gunneridae</taxon>
        <taxon>Pentapetalae</taxon>
        <taxon>asterids</taxon>
        <taxon>lamiids</taxon>
        <taxon>Solanales</taxon>
        <taxon>Solanaceae</taxon>
        <taxon>Nicotianoideae</taxon>
        <taxon>Nicotianeae</taxon>
        <taxon>Nicotiana</taxon>
    </lineage>
</organism>
<proteinExistence type="evidence at transcript level"/>
<evidence type="ECO:0000250" key="1"/>
<evidence type="ECO:0000305" key="2"/>
<accession>P49332</accession>
<comment type="function">
    <text>Conjugation of reduced glutathione to a wide number of exogenous and endogenous hydrophobic electrophiles.</text>
</comment>
<comment type="catalytic activity">
    <reaction>
        <text>RX + glutathione = an S-substituted glutathione + a halide anion + H(+)</text>
        <dbReference type="Rhea" id="RHEA:16437"/>
        <dbReference type="ChEBI" id="CHEBI:15378"/>
        <dbReference type="ChEBI" id="CHEBI:16042"/>
        <dbReference type="ChEBI" id="CHEBI:17792"/>
        <dbReference type="ChEBI" id="CHEBI:57925"/>
        <dbReference type="ChEBI" id="CHEBI:90779"/>
        <dbReference type="EC" id="2.5.1.18"/>
    </reaction>
</comment>
<comment type="tissue specificity">
    <text>Abundant in seedlings and roots. It is also found in the shoot tips, flowers and leaves.</text>
</comment>
<comment type="induction">
    <text>By auxin.</text>
</comment>
<comment type="similarity">
    <text evidence="2">Belongs to the GST superfamily. Phi family.</text>
</comment>
<gene>
    <name type="primary">PARC</name>
</gene>
<reference key="1">
    <citation type="journal article" date="1992" name="Plant Cell Physiol.">
        <title>Differential expression of an auxin-regulated gene, parC, and a novel related gene, C-7 from tobacco mesophyll protoplasts in response to external stimuli and plant tissues.</title>
        <authorList>
            <person name="Takahashi Y."/>
            <person name="Nagata T."/>
        </authorList>
    </citation>
    <scope>NUCLEOTIDE SEQUENCE [MRNA]</scope>
    <source>
        <strain>cv. Xanthi NC</strain>
        <tissue>Leaf mesophyll</tissue>
    </source>
</reference>
<sequence>MANEEVILLDFWPSMFGMRLRIALAEKEIKYEYKQEDLRNKSPLLLQMNPIHKKIPVLIHNGKPICESIIAVEYIEEVWKDKAPSLLPSDPYDRAQARFWADYIDKKLYDFGRKLWATKGEEQEAAKKDFIECLKVLEGALGDRPYFGGESFGFVDIALIGFYSWFYAYETFGNFSTEAECPKFVAWAKRCMQRESVAKSLPDQPKVLEFVKVLRQKFGLE</sequence>
<keyword id="KW-0927">Auxin signaling pathway</keyword>
<keyword id="KW-1185">Reference proteome</keyword>
<keyword id="KW-0808">Transferase</keyword>
<protein>
    <recommendedName>
        <fullName>Probable glutathione S-transferase parC</fullName>
        <ecNumber>2.5.1.18</ecNumber>
    </recommendedName>
    <alternativeName>
        <fullName>Auxin-regulated protein parC</fullName>
    </alternativeName>
</protein>